<reference key="1">
    <citation type="submission" date="2006-03" db="EMBL/GenBank/DDBJ databases">
        <title>Complete sequence of Rhodopseudomonas palustris BisB5.</title>
        <authorList>
            <consortium name="US DOE Joint Genome Institute"/>
            <person name="Copeland A."/>
            <person name="Lucas S."/>
            <person name="Lapidus A."/>
            <person name="Barry K."/>
            <person name="Detter J.C."/>
            <person name="Glavina del Rio T."/>
            <person name="Hammon N."/>
            <person name="Israni S."/>
            <person name="Dalin E."/>
            <person name="Tice H."/>
            <person name="Pitluck S."/>
            <person name="Chain P."/>
            <person name="Malfatti S."/>
            <person name="Shin M."/>
            <person name="Vergez L."/>
            <person name="Schmutz J."/>
            <person name="Larimer F."/>
            <person name="Land M."/>
            <person name="Hauser L."/>
            <person name="Pelletier D.A."/>
            <person name="Kyrpides N."/>
            <person name="Lykidis A."/>
            <person name="Oda Y."/>
            <person name="Harwood C.S."/>
            <person name="Richardson P."/>
        </authorList>
    </citation>
    <scope>NUCLEOTIDE SEQUENCE [LARGE SCALE GENOMIC DNA]</scope>
    <source>
        <strain>BisB5</strain>
    </source>
</reference>
<comment type="function">
    <text evidence="1">Fluoride-specific ion channel. Important for reducing fluoride concentration in the cell, thus reducing its toxicity.</text>
</comment>
<comment type="catalytic activity">
    <reaction evidence="1">
        <text>fluoride(in) = fluoride(out)</text>
        <dbReference type="Rhea" id="RHEA:76159"/>
        <dbReference type="ChEBI" id="CHEBI:17051"/>
    </reaction>
    <physiologicalReaction direction="left-to-right" evidence="1">
        <dbReference type="Rhea" id="RHEA:76160"/>
    </physiologicalReaction>
</comment>
<comment type="activity regulation">
    <text evidence="1">Na(+) is not transported, but it plays an essential structural role and its presence is essential for fluoride channel function.</text>
</comment>
<comment type="subcellular location">
    <subcellularLocation>
        <location evidence="1">Cell inner membrane</location>
        <topology evidence="1">Multi-pass membrane protein</topology>
    </subcellularLocation>
</comment>
<comment type="similarity">
    <text evidence="1">Belongs to the fluoride channel Fluc/FEX (TC 1.A.43) family.</text>
</comment>
<keyword id="KW-0997">Cell inner membrane</keyword>
<keyword id="KW-1003">Cell membrane</keyword>
<keyword id="KW-0407">Ion channel</keyword>
<keyword id="KW-0406">Ion transport</keyword>
<keyword id="KW-0472">Membrane</keyword>
<keyword id="KW-0479">Metal-binding</keyword>
<keyword id="KW-0915">Sodium</keyword>
<keyword id="KW-0812">Transmembrane</keyword>
<keyword id="KW-1133">Transmembrane helix</keyword>
<keyword id="KW-0813">Transport</keyword>
<protein>
    <recommendedName>
        <fullName evidence="1">Fluoride-specific ion channel FluC</fullName>
    </recommendedName>
</protein>
<dbReference type="EMBL" id="CP000283">
    <property type="protein sequence ID" value="ABE40843.1"/>
    <property type="molecule type" value="Genomic_DNA"/>
</dbReference>
<dbReference type="SMR" id="Q132Z6"/>
<dbReference type="KEGG" id="rpd:RPD_3620"/>
<dbReference type="eggNOG" id="COG0239">
    <property type="taxonomic scope" value="Bacteria"/>
</dbReference>
<dbReference type="HOGENOM" id="CLU_114342_2_3_5"/>
<dbReference type="BioCyc" id="RPAL316057:RPD_RS18205-MONOMER"/>
<dbReference type="Proteomes" id="UP000001818">
    <property type="component" value="Chromosome"/>
</dbReference>
<dbReference type="GO" id="GO:0005886">
    <property type="term" value="C:plasma membrane"/>
    <property type="evidence" value="ECO:0007669"/>
    <property type="project" value="UniProtKB-SubCell"/>
</dbReference>
<dbReference type="GO" id="GO:0062054">
    <property type="term" value="F:fluoride channel activity"/>
    <property type="evidence" value="ECO:0007669"/>
    <property type="project" value="UniProtKB-UniRule"/>
</dbReference>
<dbReference type="GO" id="GO:0046872">
    <property type="term" value="F:metal ion binding"/>
    <property type="evidence" value="ECO:0007669"/>
    <property type="project" value="UniProtKB-KW"/>
</dbReference>
<dbReference type="GO" id="GO:0140114">
    <property type="term" value="P:cellular detoxification of fluoride"/>
    <property type="evidence" value="ECO:0007669"/>
    <property type="project" value="UniProtKB-UniRule"/>
</dbReference>
<dbReference type="HAMAP" id="MF_00454">
    <property type="entry name" value="FluC"/>
    <property type="match status" value="1"/>
</dbReference>
<dbReference type="InterPro" id="IPR003691">
    <property type="entry name" value="FluC"/>
</dbReference>
<dbReference type="NCBIfam" id="TIGR00494">
    <property type="entry name" value="crcB"/>
    <property type="match status" value="1"/>
</dbReference>
<dbReference type="NCBIfam" id="NF010791">
    <property type="entry name" value="PRK14195.1"/>
    <property type="match status" value="1"/>
</dbReference>
<dbReference type="NCBIfam" id="NF010794">
    <property type="entry name" value="PRK14198.1"/>
    <property type="match status" value="1"/>
</dbReference>
<dbReference type="PANTHER" id="PTHR28259">
    <property type="entry name" value="FLUORIDE EXPORT PROTEIN 1-RELATED"/>
    <property type="match status" value="1"/>
</dbReference>
<dbReference type="PANTHER" id="PTHR28259:SF18">
    <property type="entry name" value="FLUORIDE-SPECIFIC ION CHANNEL FLUC"/>
    <property type="match status" value="1"/>
</dbReference>
<dbReference type="Pfam" id="PF02537">
    <property type="entry name" value="CRCB"/>
    <property type="match status" value="1"/>
</dbReference>
<organism>
    <name type="scientific">Rhodopseudomonas palustris (strain BisB5)</name>
    <dbReference type="NCBI Taxonomy" id="316057"/>
    <lineage>
        <taxon>Bacteria</taxon>
        <taxon>Pseudomonadati</taxon>
        <taxon>Pseudomonadota</taxon>
        <taxon>Alphaproteobacteria</taxon>
        <taxon>Hyphomicrobiales</taxon>
        <taxon>Nitrobacteraceae</taxon>
        <taxon>Rhodopseudomonas</taxon>
    </lineage>
</organism>
<gene>
    <name evidence="1" type="primary">fluC</name>
    <name evidence="1" type="synonym">crcB</name>
    <name type="ordered locus">RPD_3620</name>
</gene>
<name>FLUC_RHOPS</name>
<feature type="chain" id="PRO_1000026410" description="Fluoride-specific ion channel FluC">
    <location>
        <begin position="1"/>
        <end position="124"/>
    </location>
</feature>
<feature type="transmembrane region" description="Helical" evidence="1">
    <location>
        <begin position="3"/>
        <end position="23"/>
    </location>
</feature>
<feature type="transmembrane region" description="Helical" evidence="1">
    <location>
        <begin position="36"/>
        <end position="56"/>
    </location>
</feature>
<feature type="transmembrane region" description="Helical" evidence="1">
    <location>
        <begin position="66"/>
        <end position="86"/>
    </location>
</feature>
<feature type="transmembrane region" description="Helical" evidence="1">
    <location>
        <begin position="100"/>
        <end position="120"/>
    </location>
</feature>
<feature type="binding site" evidence="1">
    <location>
        <position position="74"/>
    </location>
    <ligand>
        <name>Na(+)</name>
        <dbReference type="ChEBI" id="CHEBI:29101"/>
        <note>structural</note>
    </ligand>
</feature>
<feature type="binding site" evidence="1">
    <location>
        <position position="77"/>
    </location>
    <ligand>
        <name>Na(+)</name>
        <dbReference type="ChEBI" id="CHEBI:29101"/>
        <note>structural</note>
    </ligand>
</feature>
<proteinExistence type="inferred from homology"/>
<accession>Q132Z6</accession>
<evidence type="ECO:0000255" key="1">
    <source>
        <dbReference type="HAMAP-Rule" id="MF_00454"/>
    </source>
</evidence>
<sequence>MTYLLVFLGGGLGAMFRHFINTVSGRMLGTAFPYHTFFINVSGSLVMGLIAGYFAFKGGSSQHVRLFLMTGILGGYTTFSAFSLDAALLYERGAVGLAALYVLGSVALAIAGLFAGLALIRAIT</sequence>